<organism>
    <name type="scientific">Acidithiobacillus ferrooxidans (strain ATCC 23270 / DSM 14882 / CIP 104768 / NCIMB 8455)</name>
    <name type="common">Ferrobacillus ferrooxidans (strain ATCC 23270)</name>
    <dbReference type="NCBI Taxonomy" id="243159"/>
    <lineage>
        <taxon>Bacteria</taxon>
        <taxon>Pseudomonadati</taxon>
        <taxon>Pseudomonadota</taxon>
        <taxon>Acidithiobacillia</taxon>
        <taxon>Acidithiobacillales</taxon>
        <taxon>Acidithiobacillaceae</taxon>
        <taxon>Acidithiobacillus</taxon>
    </lineage>
</organism>
<gene>
    <name evidence="1" type="primary">hisG</name>
    <name type="ordered locus">AFE_3040</name>
</gene>
<sequence length="215" mass="23614">MSTGITIALSKGRILQEAIPLFAGAGIHLAEDPEESRKLIIPSTDPTVRFLVIRASDVPTYVTWGAADVGIAGKDVLLEQEGLDLYEPLDLRIGICHMAVAEPAAMAADDAPQSWERVRIATKYPHITRHYFHSRGVQTEIIKLYGSMELAPLVGLADRIVDLVSSGRTLKENGLVEVEEIMPISSRLVVNRAAMKLKRRAIETLIRQLEAQVTP</sequence>
<feature type="chain" id="PRO_1000213247" description="ATP phosphoribosyltransferase">
    <location>
        <begin position="1"/>
        <end position="215"/>
    </location>
</feature>
<dbReference type="EC" id="2.4.2.17" evidence="1"/>
<dbReference type="EMBL" id="CP001219">
    <property type="protein sequence ID" value="ACK78512.1"/>
    <property type="molecule type" value="Genomic_DNA"/>
</dbReference>
<dbReference type="RefSeq" id="WP_012537562.1">
    <property type="nucleotide sequence ID" value="NC_011761.1"/>
</dbReference>
<dbReference type="SMR" id="B7JA13"/>
<dbReference type="STRING" id="243159.AFE_3040"/>
<dbReference type="PaxDb" id="243159-AFE_3040"/>
<dbReference type="GeneID" id="65282042"/>
<dbReference type="KEGG" id="afr:AFE_3040"/>
<dbReference type="eggNOG" id="COG0040">
    <property type="taxonomic scope" value="Bacteria"/>
</dbReference>
<dbReference type="HOGENOM" id="CLU_038115_2_0_6"/>
<dbReference type="UniPathway" id="UPA00031">
    <property type="reaction ID" value="UER00006"/>
</dbReference>
<dbReference type="Proteomes" id="UP000001362">
    <property type="component" value="Chromosome"/>
</dbReference>
<dbReference type="GO" id="GO:0005737">
    <property type="term" value="C:cytoplasm"/>
    <property type="evidence" value="ECO:0007669"/>
    <property type="project" value="UniProtKB-SubCell"/>
</dbReference>
<dbReference type="GO" id="GO:0005524">
    <property type="term" value="F:ATP binding"/>
    <property type="evidence" value="ECO:0007669"/>
    <property type="project" value="UniProtKB-KW"/>
</dbReference>
<dbReference type="GO" id="GO:0003879">
    <property type="term" value="F:ATP phosphoribosyltransferase activity"/>
    <property type="evidence" value="ECO:0007669"/>
    <property type="project" value="UniProtKB-UniRule"/>
</dbReference>
<dbReference type="GO" id="GO:0000105">
    <property type="term" value="P:L-histidine biosynthetic process"/>
    <property type="evidence" value="ECO:0007669"/>
    <property type="project" value="UniProtKB-UniRule"/>
</dbReference>
<dbReference type="CDD" id="cd13595">
    <property type="entry name" value="PBP2_HisGs"/>
    <property type="match status" value="1"/>
</dbReference>
<dbReference type="FunFam" id="3.40.190.10:FF:000011">
    <property type="entry name" value="ATP phosphoribosyltransferase"/>
    <property type="match status" value="1"/>
</dbReference>
<dbReference type="Gene3D" id="3.40.190.10">
    <property type="entry name" value="Periplasmic binding protein-like II"/>
    <property type="match status" value="2"/>
</dbReference>
<dbReference type="HAMAP" id="MF_01018">
    <property type="entry name" value="HisG_Short"/>
    <property type="match status" value="1"/>
</dbReference>
<dbReference type="InterPro" id="IPR013820">
    <property type="entry name" value="ATP_PRibTrfase_cat"/>
</dbReference>
<dbReference type="InterPro" id="IPR018198">
    <property type="entry name" value="ATP_PRibTrfase_CS"/>
</dbReference>
<dbReference type="InterPro" id="IPR001348">
    <property type="entry name" value="ATP_PRibTrfase_HisG"/>
</dbReference>
<dbReference type="InterPro" id="IPR024893">
    <property type="entry name" value="ATP_PRibTrfase_HisG_short"/>
</dbReference>
<dbReference type="NCBIfam" id="TIGR00070">
    <property type="entry name" value="hisG"/>
    <property type="match status" value="1"/>
</dbReference>
<dbReference type="PANTHER" id="PTHR21403:SF8">
    <property type="entry name" value="ATP PHOSPHORIBOSYLTRANSFERASE"/>
    <property type="match status" value="1"/>
</dbReference>
<dbReference type="PANTHER" id="PTHR21403">
    <property type="entry name" value="ATP PHOSPHORIBOSYLTRANSFERASE ATP-PRTASE"/>
    <property type="match status" value="1"/>
</dbReference>
<dbReference type="Pfam" id="PF01634">
    <property type="entry name" value="HisG"/>
    <property type="match status" value="1"/>
</dbReference>
<dbReference type="SUPFAM" id="SSF53850">
    <property type="entry name" value="Periplasmic binding protein-like II"/>
    <property type="match status" value="1"/>
</dbReference>
<dbReference type="PROSITE" id="PS01316">
    <property type="entry name" value="ATP_P_PHORIBOSYLTR"/>
    <property type="match status" value="1"/>
</dbReference>
<protein>
    <recommendedName>
        <fullName evidence="1">ATP phosphoribosyltransferase</fullName>
        <shortName evidence="1">ATP-PRT</shortName>
        <shortName evidence="1">ATP-PRTase</shortName>
        <ecNumber evidence="1">2.4.2.17</ecNumber>
    </recommendedName>
</protein>
<evidence type="ECO:0000255" key="1">
    <source>
        <dbReference type="HAMAP-Rule" id="MF_01018"/>
    </source>
</evidence>
<keyword id="KW-0028">Amino-acid biosynthesis</keyword>
<keyword id="KW-0067">ATP-binding</keyword>
<keyword id="KW-0963">Cytoplasm</keyword>
<keyword id="KW-0328">Glycosyltransferase</keyword>
<keyword id="KW-0368">Histidine biosynthesis</keyword>
<keyword id="KW-0547">Nucleotide-binding</keyword>
<keyword id="KW-1185">Reference proteome</keyword>
<keyword id="KW-0808">Transferase</keyword>
<proteinExistence type="inferred from homology"/>
<reference key="1">
    <citation type="journal article" date="2008" name="BMC Genomics">
        <title>Acidithiobacillus ferrooxidans metabolism: from genome sequence to industrial applications.</title>
        <authorList>
            <person name="Valdes J."/>
            <person name="Pedroso I."/>
            <person name="Quatrini R."/>
            <person name="Dodson R.J."/>
            <person name="Tettelin H."/>
            <person name="Blake R. II"/>
            <person name="Eisen J.A."/>
            <person name="Holmes D.S."/>
        </authorList>
    </citation>
    <scope>NUCLEOTIDE SEQUENCE [LARGE SCALE GENOMIC DNA]</scope>
    <source>
        <strain>ATCC 23270 / DSM 14882 / CIP 104768 / NCIMB 8455</strain>
    </source>
</reference>
<name>HIS1_ACIF2</name>
<accession>B7JA13</accession>
<comment type="function">
    <text evidence="1">Catalyzes the condensation of ATP and 5-phosphoribose 1-diphosphate to form N'-(5'-phosphoribosyl)-ATP (PR-ATP). Has a crucial role in the pathway because the rate of histidine biosynthesis seems to be controlled primarily by regulation of HisG enzymatic activity.</text>
</comment>
<comment type="catalytic activity">
    <reaction evidence="1">
        <text>1-(5-phospho-beta-D-ribosyl)-ATP + diphosphate = 5-phospho-alpha-D-ribose 1-diphosphate + ATP</text>
        <dbReference type="Rhea" id="RHEA:18473"/>
        <dbReference type="ChEBI" id="CHEBI:30616"/>
        <dbReference type="ChEBI" id="CHEBI:33019"/>
        <dbReference type="ChEBI" id="CHEBI:58017"/>
        <dbReference type="ChEBI" id="CHEBI:73183"/>
        <dbReference type="EC" id="2.4.2.17"/>
    </reaction>
</comment>
<comment type="pathway">
    <text evidence="1">Amino-acid biosynthesis; L-histidine biosynthesis; L-histidine from 5-phospho-alpha-D-ribose 1-diphosphate: step 1/9.</text>
</comment>
<comment type="subunit">
    <text evidence="1">Heteromultimer composed of HisG and HisZ subunits.</text>
</comment>
<comment type="subcellular location">
    <subcellularLocation>
        <location evidence="1">Cytoplasm</location>
    </subcellularLocation>
</comment>
<comment type="domain">
    <text>Lacks the C-terminal regulatory region which is replaced by HisZ.</text>
</comment>
<comment type="similarity">
    <text evidence="1">Belongs to the ATP phosphoribosyltransferase family. Short subfamily.</text>
</comment>